<proteinExistence type="inferred from homology"/>
<dbReference type="EMBL" id="AL596171">
    <property type="protein sequence ID" value="CAC97404.1"/>
    <property type="molecule type" value="Genomic_DNA"/>
</dbReference>
<dbReference type="PIR" id="AD1704">
    <property type="entry name" value="AD1704"/>
</dbReference>
<dbReference type="RefSeq" id="WP_010991050.1">
    <property type="nucleotide sequence ID" value="NC_003212.1"/>
</dbReference>
<dbReference type="SMR" id="Q929U9"/>
<dbReference type="STRING" id="272626.gene:17566532"/>
<dbReference type="KEGG" id="lin:groES"/>
<dbReference type="eggNOG" id="COG0234">
    <property type="taxonomic scope" value="Bacteria"/>
</dbReference>
<dbReference type="HOGENOM" id="CLU_132825_2_0_9"/>
<dbReference type="OrthoDB" id="9806791at2"/>
<dbReference type="Proteomes" id="UP000002513">
    <property type="component" value="Chromosome"/>
</dbReference>
<dbReference type="GO" id="GO:0005737">
    <property type="term" value="C:cytoplasm"/>
    <property type="evidence" value="ECO:0007669"/>
    <property type="project" value="UniProtKB-SubCell"/>
</dbReference>
<dbReference type="GO" id="GO:0005524">
    <property type="term" value="F:ATP binding"/>
    <property type="evidence" value="ECO:0007669"/>
    <property type="project" value="InterPro"/>
</dbReference>
<dbReference type="GO" id="GO:0046872">
    <property type="term" value="F:metal ion binding"/>
    <property type="evidence" value="ECO:0007669"/>
    <property type="project" value="TreeGrafter"/>
</dbReference>
<dbReference type="GO" id="GO:0044183">
    <property type="term" value="F:protein folding chaperone"/>
    <property type="evidence" value="ECO:0007669"/>
    <property type="project" value="InterPro"/>
</dbReference>
<dbReference type="GO" id="GO:0051087">
    <property type="term" value="F:protein-folding chaperone binding"/>
    <property type="evidence" value="ECO:0007669"/>
    <property type="project" value="TreeGrafter"/>
</dbReference>
<dbReference type="GO" id="GO:0051082">
    <property type="term" value="F:unfolded protein binding"/>
    <property type="evidence" value="ECO:0007669"/>
    <property type="project" value="TreeGrafter"/>
</dbReference>
<dbReference type="GO" id="GO:0051085">
    <property type="term" value="P:chaperone cofactor-dependent protein refolding"/>
    <property type="evidence" value="ECO:0007669"/>
    <property type="project" value="TreeGrafter"/>
</dbReference>
<dbReference type="CDD" id="cd00320">
    <property type="entry name" value="cpn10"/>
    <property type="match status" value="1"/>
</dbReference>
<dbReference type="FunFam" id="2.30.33.40:FF:000001">
    <property type="entry name" value="10 kDa chaperonin"/>
    <property type="match status" value="1"/>
</dbReference>
<dbReference type="Gene3D" id="2.30.33.40">
    <property type="entry name" value="GroES chaperonin"/>
    <property type="match status" value="1"/>
</dbReference>
<dbReference type="HAMAP" id="MF_00580">
    <property type="entry name" value="CH10"/>
    <property type="match status" value="1"/>
</dbReference>
<dbReference type="InterPro" id="IPR020818">
    <property type="entry name" value="Chaperonin_GroES"/>
</dbReference>
<dbReference type="InterPro" id="IPR037124">
    <property type="entry name" value="Chaperonin_GroES_sf"/>
</dbReference>
<dbReference type="InterPro" id="IPR018369">
    <property type="entry name" value="Chaprnonin_Cpn10_CS"/>
</dbReference>
<dbReference type="InterPro" id="IPR011032">
    <property type="entry name" value="GroES-like_sf"/>
</dbReference>
<dbReference type="NCBIfam" id="NF001530">
    <property type="entry name" value="PRK00364.1-6"/>
    <property type="match status" value="1"/>
</dbReference>
<dbReference type="NCBIfam" id="NF001531">
    <property type="entry name" value="PRK00364.2-2"/>
    <property type="match status" value="1"/>
</dbReference>
<dbReference type="NCBIfam" id="NF001533">
    <property type="entry name" value="PRK00364.2-4"/>
    <property type="match status" value="1"/>
</dbReference>
<dbReference type="NCBIfam" id="NF001534">
    <property type="entry name" value="PRK00364.2-5"/>
    <property type="match status" value="1"/>
</dbReference>
<dbReference type="PANTHER" id="PTHR10772">
    <property type="entry name" value="10 KDA HEAT SHOCK PROTEIN"/>
    <property type="match status" value="1"/>
</dbReference>
<dbReference type="PANTHER" id="PTHR10772:SF58">
    <property type="entry name" value="CO-CHAPERONIN GROES"/>
    <property type="match status" value="1"/>
</dbReference>
<dbReference type="Pfam" id="PF00166">
    <property type="entry name" value="Cpn10"/>
    <property type="match status" value="1"/>
</dbReference>
<dbReference type="PRINTS" id="PR00297">
    <property type="entry name" value="CHAPERONIN10"/>
</dbReference>
<dbReference type="SMART" id="SM00883">
    <property type="entry name" value="Cpn10"/>
    <property type="match status" value="1"/>
</dbReference>
<dbReference type="SUPFAM" id="SSF50129">
    <property type="entry name" value="GroES-like"/>
    <property type="match status" value="1"/>
</dbReference>
<dbReference type="PROSITE" id="PS00681">
    <property type="entry name" value="CHAPERONINS_CPN10"/>
    <property type="match status" value="1"/>
</dbReference>
<gene>
    <name evidence="1" type="primary">groES</name>
    <name evidence="1" type="synonym">groS</name>
    <name type="ordered locus">lin2175</name>
</gene>
<evidence type="ECO:0000255" key="1">
    <source>
        <dbReference type="HAMAP-Rule" id="MF_00580"/>
    </source>
</evidence>
<evidence type="ECO:0000305" key="2"/>
<comment type="function">
    <text evidence="1">Together with the chaperonin GroEL, plays an essential role in assisting protein folding. The GroEL-GroES system forms a nano-cage that allows encapsulation of the non-native substrate proteins and provides a physical environment optimized to promote and accelerate protein folding. GroES binds to the apical surface of the GroEL ring, thereby capping the opening of the GroEL channel.</text>
</comment>
<comment type="subunit">
    <text evidence="1">Heptamer of 7 subunits arranged in a ring. Interacts with the chaperonin GroEL.</text>
</comment>
<comment type="subcellular location">
    <subcellularLocation>
        <location evidence="1">Cytoplasm</location>
    </subcellularLocation>
</comment>
<comment type="similarity">
    <text evidence="1 2">Belongs to the GroES chaperonin family.</text>
</comment>
<reference key="1">
    <citation type="journal article" date="2001" name="Science">
        <title>Comparative genomics of Listeria species.</title>
        <authorList>
            <person name="Glaser P."/>
            <person name="Frangeul L."/>
            <person name="Buchrieser C."/>
            <person name="Rusniok C."/>
            <person name="Amend A."/>
            <person name="Baquero F."/>
            <person name="Berche P."/>
            <person name="Bloecker H."/>
            <person name="Brandt P."/>
            <person name="Chakraborty T."/>
            <person name="Charbit A."/>
            <person name="Chetouani F."/>
            <person name="Couve E."/>
            <person name="de Daruvar A."/>
            <person name="Dehoux P."/>
            <person name="Domann E."/>
            <person name="Dominguez-Bernal G."/>
            <person name="Duchaud E."/>
            <person name="Durant L."/>
            <person name="Dussurget O."/>
            <person name="Entian K.-D."/>
            <person name="Fsihi H."/>
            <person name="Garcia-del Portillo F."/>
            <person name="Garrido P."/>
            <person name="Gautier L."/>
            <person name="Goebel W."/>
            <person name="Gomez-Lopez N."/>
            <person name="Hain T."/>
            <person name="Hauf J."/>
            <person name="Jackson D."/>
            <person name="Jones L.-M."/>
            <person name="Kaerst U."/>
            <person name="Kreft J."/>
            <person name="Kuhn M."/>
            <person name="Kunst F."/>
            <person name="Kurapkat G."/>
            <person name="Madueno E."/>
            <person name="Maitournam A."/>
            <person name="Mata Vicente J."/>
            <person name="Ng E."/>
            <person name="Nedjari H."/>
            <person name="Nordsiek G."/>
            <person name="Novella S."/>
            <person name="de Pablos B."/>
            <person name="Perez-Diaz J.-C."/>
            <person name="Purcell R."/>
            <person name="Remmel B."/>
            <person name="Rose M."/>
            <person name="Schlueter T."/>
            <person name="Simoes N."/>
            <person name="Tierrez A."/>
            <person name="Vazquez-Boland J.-A."/>
            <person name="Voss H."/>
            <person name="Wehland J."/>
            <person name="Cossart P."/>
        </authorList>
    </citation>
    <scope>NUCLEOTIDE SEQUENCE [LARGE SCALE GENOMIC DNA]</scope>
    <source>
        <strain>ATCC BAA-680 / CLIP 11262</strain>
    </source>
</reference>
<sequence length="94" mass="10050">MLKPLGDRVVIEVLEAEEKTASGIVLPDSAKEKPQSGKIVAVGSGRVLDNGTKEPLEVAEGDTVIFAKYSGTEVTYEGTDYLILRESDILAISK</sequence>
<feature type="chain" id="PRO_0000174780" description="Co-chaperonin GroES">
    <location>
        <begin position="1"/>
        <end position="94"/>
    </location>
</feature>
<organism>
    <name type="scientific">Listeria innocua serovar 6a (strain ATCC BAA-680 / CLIP 11262)</name>
    <dbReference type="NCBI Taxonomy" id="272626"/>
    <lineage>
        <taxon>Bacteria</taxon>
        <taxon>Bacillati</taxon>
        <taxon>Bacillota</taxon>
        <taxon>Bacilli</taxon>
        <taxon>Bacillales</taxon>
        <taxon>Listeriaceae</taxon>
        <taxon>Listeria</taxon>
    </lineage>
</organism>
<keyword id="KW-0143">Chaperone</keyword>
<keyword id="KW-0963">Cytoplasm</keyword>
<protein>
    <recommendedName>
        <fullName evidence="1">Co-chaperonin GroES</fullName>
    </recommendedName>
    <alternativeName>
        <fullName evidence="1">10 kDa chaperonin</fullName>
    </alternativeName>
    <alternativeName>
        <fullName evidence="1">Chaperonin-10</fullName>
        <shortName evidence="1">Cpn10</shortName>
    </alternativeName>
</protein>
<name>CH10_LISIN</name>
<accession>Q929U9</accession>